<sequence length="226" mass="24613">MKLGLVAGMLAVCFSFSSVAMTLKLTPEIDLLVVDGKNMSGSLLKGADSLELNSGMHQILFKVIKPLPTDPLVLYSSPPLIVVFNAHNTRSVAIKLPVINTLRDGHQFSKNPLYQLIGDNGHPLSVRHDVLRQDHLNNSTTLETVMAAYNVGKYNASVPAFAAIPPSPVSAVPGTTIPVAGVNTPHKTASLQGENVTEQMLQYWFLQANPETQKRFLIWAKKQPIH</sequence>
<comment type="similarity">
    <text evidence="1">Belongs to the UPF0319 family.</text>
</comment>
<evidence type="ECO:0000255" key="1">
    <source>
        <dbReference type="HAMAP-Rule" id="MF_00789"/>
    </source>
</evidence>
<keyword id="KW-0732">Signal</keyword>
<gene>
    <name type="ordered locus">YPTS_1566</name>
</gene>
<feature type="signal peptide" evidence="1">
    <location>
        <begin position="1"/>
        <end position="20"/>
    </location>
</feature>
<feature type="chain" id="PRO_5000345291" description="UPF0319 protein YPTS_1566">
    <location>
        <begin position="21"/>
        <end position="226"/>
    </location>
</feature>
<dbReference type="EMBL" id="CP001048">
    <property type="protein sequence ID" value="ACC88538.1"/>
    <property type="molecule type" value="Genomic_DNA"/>
</dbReference>
<dbReference type="RefSeq" id="WP_002213058.1">
    <property type="nucleotide sequence ID" value="NZ_CP009780.1"/>
</dbReference>
<dbReference type="KEGG" id="ypb:YPTS_1566"/>
<dbReference type="PATRIC" id="fig|502801.10.peg.930"/>
<dbReference type="HAMAP" id="MF_00789">
    <property type="entry name" value="UPF0319"/>
    <property type="match status" value="1"/>
</dbReference>
<dbReference type="InterPro" id="IPR018635">
    <property type="entry name" value="UPF0319"/>
</dbReference>
<dbReference type="NCBIfam" id="NF002967">
    <property type="entry name" value="PRK03641.1"/>
    <property type="match status" value="1"/>
</dbReference>
<dbReference type="PANTHER" id="PTHR38108">
    <property type="entry name" value="UPF0319 PROTEIN YCCT"/>
    <property type="match status" value="1"/>
</dbReference>
<dbReference type="PANTHER" id="PTHR38108:SF1">
    <property type="entry name" value="UPF0319 PROTEIN YCCT"/>
    <property type="match status" value="1"/>
</dbReference>
<dbReference type="Pfam" id="PF09829">
    <property type="entry name" value="DUF2057"/>
    <property type="match status" value="1"/>
</dbReference>
<proteinExistence type="inferred from homology"/>
<accession>B2JYU1</accession>
<reference key="1">
    <citation type="submission" date="2008-04" db="EMBL/GenBank/DDBJ databases">
        <title>Complete sequence of Yersinia pseudotuberculosis PB1/+.</title>
        <authorList>
            <person name="Copeland A."/>
            <person name="Lucas S."/>
            <person name="Lapidus A."/>
            <person name="Glavina del Rio T."/>
            <person name="Dalin E."/>
            <person name="Tice H."/>
            <person name="Bruce D."/>
            <person name="Goodwin L."/>
            <person name="Pitluck S."/>
            <person name="Munk A.C."/>
            <person name="Brettin T."/>
            <person name="Detter J.C."/>
            <person name="Han C."/>
            <person name="Tapia R."/>
            <person name="Schmutz J."/>
            <person name="Larimer F."/>
            <person name="Land M."/>
            <person name="Hauser L."/>
            <person name="Challacombe J.F."/>
            <person name="Green L."/>
            <person name="Lindler L.E."/>
            <person name="Nikolich M.P."/>
            <person name="Richardson P."/>
        </authorList>
    </citation>
    <scope>NUCLEOTIDE SEQUENCE [LARGE SCALE GENOMIC DNA]</scope>
    <source>
        <strain>PB1/+</strain>
    </source>
</reference>
<organism>
    <name type="scientific">Yersinia pseudotuberculosis serotype IB (strain PB1/+)</name>
    <dbReference type="NCBI Taxonomy" id="502801"/>
    <lineage>
        <taxon>Bacteria</taxon>
        <taxon>Pseudomonadati</taxon>
        <taxon>Pseudomonadota</taxon>
        <taxon>Gammaproteobacteria</taxon>
        <taxon>Enterobacterales</taxon>
        <taxon>Yersiniaceae</taxon>
        <taxon>Yersinia</taxon>
    </lineage>
</organism>
<name>Y1566_YERPB</name>
<protein>
    <recommendedName>
        <fullName evidence="1">UPF0319 protein YPTS_1566</fullName>
    </recommendedName>
</protein>